<organism>
    <name type="scientific">Pseudomonas syringae pv. tomato (strain ATCC BAA-871 / DC3000)</name>
    <dbReference type="NCBI Taxonomy" id="223283"/>
    <lineage>
        <taxon>Bacteria</taxon>
        <taxon>Pseudomonadati</taxon>
        <taxon>Pseudomonadota</taxon>
        <taxon>Gammaproteobacteria</taxon>
        <taxon>Pseudomonadales</taxon>
        <taxon>Pseudomonadaceae</taxon>
        <taxon>Pseudomonas</taxon>
    </lineage>
</organism>
<protein>
    <recommendedName>
        <fullName evidence="1">Alkanesulfonate monooxygenase</fullName>
        <ecNumber evidence="1">1.14.14.5</ecNumber>
    </recommendedName>
    <alternativeName>
        <fullName evidence="1">FMNH2-dependent aliphatic sulfonate monooxygenase</fullName>
    </alternativeName>
</protein>
<name>SSUD_PSESM</name>
<evidence type="ECO:0000255" key="1">
    <source>
        <dbReference type="HAMAP-Rule" id="MF_01229"/>
    </source>
</evidence>
<feature type="chain" id="PRO_0000216714" description="Alkanesulfonate monooxygenase">
    <location>
        <begin position="1"/>
        <end position="379"/>
    </location>
</feature>
<accession>Q87ZG3</accession>
<proteinExistence type="inferred from homology"/>
<reference key="1">
    <citation type="journal article" date="2003" name="Proc. Natl. Acad. Sci. U.S.A.">
        <title>The complete genome sequence of the Arabidopsis and tomato pathogen Pseudomonas syringae pv. tomato DC3000.</title>
        <authorList>
            <person name="Buell C.R."/>
            <person name="Joardar V."/>
            <person name="Lindeberg M."/>
            <person name="Selengut J."/>
            <person name="Paulsen I.T."/>
            <person name="Gwinn M.L."/>
            <person name="Dodson R.J."/>
            <person name="DeBoy R.T."/>
            <person name="Durkin A.S."/>
            <person name="Kolonay J.F."/>
            <person name="Madupu R."/>
            <person name="Daugherty S.C."/>
            <person name="Brinkac L.M."/>
            <person name="Beanan M.J."/>
            <person name="Haft D.H."/>
            <person name="Nelson W.C."/>
            <person name="Davidsen T.M."/>
            <person name="Zafar N."/>
            <person name="Zhou L."/>
            <person name="Liu J."/>
            <person name="Yuan Q."/>
            <person name="Khouri H.M."/>
            <person name="Fedorova N.B."/>
            <person name="Tran B."/>
            <person name="Russell D."/>
            <person name="Berry K.J."/>
            <person name="Utterback T.R."/>
            <person name="Van Aken S.E."/>
            <person name="Feldblyum T.V."/>
            <person name="D'Ascenzo M."/>
            <person name="Deng W.-L."/>
            <person name="Ramos A.R."/>
            <person name="Alfano J.R."/>
            <person name="Cartinhour S."/>
            <person name="Chatterjee A.K."/>
            <person name="Delaney T.P."/>
            <person name="Lazarowitz S.G."/>
            <person name="Martin G.B."/>
            <person name="Schneider D.J."/>
            <person name="Tang X."/>
            <person name="Bender C.L."/>
            <person name="White O."/>
            <person name="Fraser C.M."/>
            <person name="Collmer A."/>
        </authorList>
    </citation>
    <scope>NUCLEOTIDE SEQUENCE [LARGE SCALE GENOMIC DNA]</scope>
    <source>
        <strain>ATCC BAA-871 / DC3000</strain>
    </source>
</reference>
<sequence>MNVFWFLPTHGDGHYLGTTKGARPVTLNYLKQVAQAADDLGYYGVLIPTGRSCEDSWVIASALVPLTERLKYLVAIRPGIISPTVSARMAATLDRLSGGRLLINVVTGGDPDENRGDGSFLDHSERYEVTDEFLHIWRRVLQGEAVDFEGKHLRVQNAKALYPPIQKPYPPLYFGGSSDAAHDLAADQVDVYLTWGEPPAAVAQKLADVRERAARKGRTVKFGIRLHVIVRQTSEEAWKAASTLIEHISDETIAAAQKSFSRFDSEGQRRMAALHDGRRDNLEIAPNLWAGVGLVRGGAGTALVGNPQEVAERIKEYADLGIESFIFSAYPHLEEAYRFAELVFPLLPEPYASLAGRGITNLTGPFGEMIANDLPPQAK</sequence>
<comment type="function">
    <text evidence="1">Catalyzes the desulfonation of aliphatic sulfonates.</text>
</comment>
<comment type="catalytic activity">
    <reaction evidence="1">
        <text>an alkanesulfonate + FMNH2 + O2 = an aldehyde + FMN + sulfite + H2O + 2 H(+)</text>
        <dbReference type="Rhea" id="RHEA:23064"/>
        <dbReference type="ChEBI" id="CHEBI:15377"/>
        <dbReference type="ChEBI" id="CHEBI:15378"/>
        <dbReference type="ChEBI" id="CHEBI:15379"/>
        <dbReference type="ChEBI" id="CHEBI:17359"/>
        <dbReference type="ChEBI" id="CHEBI:17478"/>
        <dbReference type="ChEBI" id="CHEBI:57618"/>
        <dbReference type="ChEBI" id="CHEBI:58210"/>
        <dbReference type="ChEBI" id="CHEBI:134249"/>
        <dbReference type="EC" id="1.14.14.5"/>
    </reaction>
</comment>
<comment type="similarity">
    <text evidence="1">Belongs to the SsuD family.</text>
</comment>
<dbReference type="EC" id="1.14.14.5" evidence="1"/>
<dbReference type="EMBL" id="AE016853">
    <property type="protein sequence ID" value="AAO56941.1"/>
    <property type="molecule type" value="Genomic_DNA"/>
</dbReference>
<dbReference type="RefSeq" id="NP_793246.1">
    <property type="nucleotide sequence ID" value="NC_004578.1"/>
</dbReference>
<dbReference type="RefSeq" id="WP_011104574.1">
    <property type="nucleotide sequence ID" value="NC_004578.1"/>
</dbReference>
<dbReference type="SMR" id="Q87ZG3"/>
<dbReference type="STRING" id="223283.PSPTO_3466"/>
<dbReference type="GeneID" id="1185131"/>
<dbReference type="KEGG" id="pst:PSPTO_3466"/>
<dbReference type="PATRIC" id="fig|223283.9.peg.3548"/>
<dbReference type="eggNOG" id="COG2141">
    <property type="taxonomic scope" value="Bacteria"/>
</dbReference>
<dbReference type="HOGENOM" id="CLU_027853_1_0_6"/>
<dbReference type="OrthoDB" id="9814695at2"/>
<dbReference type="PhylomeDB" id="Q87ZG3"/>
<dbReference type="Proteomes" id="UP000002515">
    <property type="component" value="Chromosome"/>
</dbReference>
<dbReference type="GO" id="GO:0008726">
    <property type="term" value="F:alkanesulfonate monooxygenase activity"/>
    <property type="evidence" value="ECO:0007669"/>
    <property type="project" value="UniProtKB-UniRule"/>
</dbReference>
<dbReference type="GO" id="GO:0046306">
    <property type="term" value="P:alkanesulfonate catabolic process"/>
    <property type="evidence" value="ECO:0007669"/>
    <property type="project" value="TreeGrafter"/>
</dbReference>
<dbReference type="CDD" id="cd01094">
    <property type="entry name" value="Alkanesulfonate_monoxygenase"/>
    <property type="match status" value="1"/>
</dbReference>
<dbReference type="FunFam" id="3.20.20.30:FF:000001">
    <property type="entry name" value="Alkanesulfonate monooxygenase"/>
    <property type="match status" value="1"/>
</dbReference>
<dbReference type="Gene3D" id="3.20.20.30">
    <property type="entry name" value="Luciferase-like domain"/>
    <property type="match status" value="1"/>
</dbReference>
<dbReference type="HAMAP" id="MF_01229">
    <property type="entry name" value="Alkanesulf_monooxygen"/>
    <property type="match status" value="1"/>
</dbReference>
<dbReference type="InterPro" id="IPR019911">
    <property type="entry name" value="Alkanesulphonate_mOase_FMN-dep"/>
</dbReference>
<dbReference type="InterPro" id="IPR011251">
    <property type="entry name" value="Luciferase-like_dom"/>
</dbReference>
<dbReference type="InterPro" id="IPR036661">
    <property type="entry name" value="Luciferase-like_sf"/>
</dbReference>
<dbReference type="InterPro" id="IPR050172">
    <property type="entry name" value="SsuD_RutA_monooxygenase"/>
</dbReference>
<dbReference type="NCBIfam" id="TIGR03565">
    <property type="entry name" value="alk_sulf_monoox"/>
    <property type="match status" value="1"/>
</dbReference>
<dbReference type="NCBIfam" id="NF001939">
    <property type="entry name" value="PRK00719.1"/>
    <property type="match status" value="1"/>
</dbReference>
<dbReference type="PANTHER" id="PTHR42847">
    <property type="entry name" value="ALKANESULFONATE MONOOXYGENASE"/>
    <property type="match status" value="1"/>
</dbReference>
<dbReference type="PANTHER" id="PTHR42847:SF4">
    <property type="entry name" value="ALKANESULFONATE MONOOXYGENASE-RELATED"/>
    <property type="match status" value="1"/>
</dbReference>
<dbReference type="Pfam" id="PF00296">
    <property type="entry name" value="Bac_luciferase"/>
    <property type="match status" value="1"/>
</dbReference>
<dbReference type="SUPFAM" id="SSF51679">
    <property type="entry name" value="Bacterial luciferase-like"/>
    <property type="match status" value="1"/>
</dbReference>
<keyword id="KW-0285">Flavoprotein</keyword>
<keyword id="KW-0288">FMN</keyword>
<keyword id="KW-0503">Monooxygenase</keyword>
<keyword id="KW-0560">Oxidoreductase</keyword>
<keyword id="KW-1185">Reference proteome</keyword>
<gene>
    <name evidence="1" type="primary">ssuD</name>
    <name type="ordered locus">PSPTO_3466</name>
</gene>